<organism>
    <name type="scientific">Shewanella amazonensis (strain ATCC BAA-1098 / SB2B)</name>
    <dbReference type="NCBI Taxonomy" id="326297"/>
    <lineage>
        <taxon>Bacteria</taxon>
        <taxon>Pseudomonadati</taxon>
        <taxon>Pseudomonadota</taxon>
        <taxon>Gammaproteobacteria</taxon>
        <taxon>Alteromonadales</taxon>
        <taxon>Shewanellaceae</taxon>
        <taxon>Shewanella</taxon>
    </lineage>
</organism>
<dbReference type="EC" id="3.5.4.13" evidence="1"/>
<dbReference type="EMBL" id="CP000507">
    <property type="protein sequence ID" value="ABM00252.1"/>
    <property type="molecule type" value="Genomic_DNA"/>
</dbReference>
<dbReference type="RefSeq" id="WP_011760159.1">
    <property type="nucleotide sequence ID" value="NC_008700.1"/>
</dbReference>
<dbReference type="SMR" id="A1S795"/>
<dbReference type="STRING" id="326297.Sama_2046"/>
<dbReference type="KEGG" id="saz:Sama_2046"/>
<dbReference type="eggNOG" id="COG0717">
    <property type="taxonomic scope" value="Bacteria"/>
</dbReference>
<dbReference type="HOGENOM" id="CLU_087476_2_0_6"/>
<dbReference type="OrthoDB" id="9780956at2"/>
<dbReference type="UniPathway" id="UPA00610">
    <property type="reaction ID" value="UER00665"/>
</dbReference>
<dbReference type="Proteomes" id="UP000009175">
    <property type="component" value="Chromosome"/>
</dbReference>
<dbReference type="GO" id="GO:0008829">
    <property type="term" value="F:dCTP deaminase activity"/>
    <property type="evidence" value="ECO:0007669"/>
    <property type="project" value="UniProtKB-UniRule"/>
</dbReference>
<dbReference type="GO" id="GO:0000166">
    <property type="term" value="F:nucleotide binding"/>
    <property type="evidence" value="ECO:0007669"/>
    <property type="project" value="UniProtKB-KW"/>
</dbReference>
<dbReference type="GO" id="GO:0006226">
    <property type="term" value="P:dUMP biosynthetic process"/>
    <property type="evidence" value="ECO:0007669"/>
    <property type="project" value="UniProtKB-UniPathway"/>
</dbReference>
<dbReference type="GO" id="GO:0006229">
    <property type="term" value="P:dUTP biosynthetic process"/>
    <property type="evidence" value="ECO:0007669"/>
    <property type="project" value="UniProtKB-UniRule"/>
</dbReference>
<dbReference type="GO" id="GO:0015949">
    <property type="term" value="P:nucleobase-containing small molecule interconversion"/>
    <property type="evidence" value="ECO:0007669"/>
    <property type="project" value="TreeGrafter"/>
</dbReference>
<dbReference type="CDD" id="cd07557">
    <property type="entry name" value="trimeric_dUTPase"/>
    <property type="match status" value="1"/>
</dbReference>
<dbReference type="FunFam" id="2.70.40.10:FF:000003">
    <property type="entry name" value="dCTP deaminase"/>
    <property type="match status" value="1"/>
</dbReference>
<dbReference type="Gene3D" id="2.70.40.10">
    <property type="match status" value="1"/>
</dbReference>
<dbReference type="HAMAP" id="MF_00146">
    <property type="entry name" value="dCTP_deaminase"/>
    <property type="match status" value="1"/>
</dbReference>
<dbReference type="InterPro" id="IPR011962">
    <property type="entry name" value="dCTP_deaminase"/>
</dbReference>
<dbReference type="InterPro" id="IPR036157">
    <property type="entry name" value="dUTPase-like_sf"/>
</dbReference>
<dbReference type="InterPro" id="IPR033704">
    <property type="entry name" value="dUTPase_trimeric"/>
</dbReference>
<dbReference type="NCBIfam" id="TIGR02274">
    <property type="entry name" value="dCTP_deam"/>
    <property type="match status" value="1"/>
</dbReference>
<dbReference type="PANTHER" id="PTHR42680">
    <property type="entry name" value="DCTP DEAMINASE"/>
    <property type="match status" value="1"/>
</dbReference>
<dbReference type="PANTHER" id="PTHR42680:SF3">
    <property type="entry name" value="DCTP DEAMINASE"/>
    <property type="match status" value="1"/>
</dbReference>
<dbReference type="Pfam" id="PF22769">
    <property type="entry name" value="DCD"/>
    <property type="match status" value="1"/>
</dbReference>
<dbReference type="SUPFAM" id="SSF51283">
    <property type="entry name" value="dUTPase-like"/>
    <property type="match status" value="1"/>
</dbReference>
<sequence length="194" mass="21238">MRLTDFEIEQALDAGTILIEPRPSNDAISGVSVDVRLGNQFRVFQDHTAPFIDLSGPSAEVQAALDRVMSDKIDIKDGNAFFLHPGELALAVTLESVTLPADIVGWLDGRSSLARLGLMVHVTAHRIDPGWQGKIVLEFYNSGKLPLALRPGMTIGALNFERLSGPVSRPYNKRKNAKYKDQQEAVASRISQDS</sequence>
<reference key="1">
    <citation type="submission" date="2006-12" db="EMBL/GenBank/DDBJ databases">
        <title>Complete sequence of Shewanella amazonensis SB2B.</title>
        <authorList>
            <consortium name="US DOE Joint Genome Institute"/>
            <person name="Copeland A."/>
            <person name="Lucas S."/>
            <person name="Lapidus A."/>
            <person name="Barry K."/>
            <person name="Detter J.C."/>
            <person name="Glavina del Rio T."/>
            <person name="Hammon N."/>
            <person name="Israni S."/>
            <person name="Dalin E."/>
            <person name="Tice H."/>
            <person name="Pitluck S."/>
            <person name="Munk A.C."/>
            <person name="Brettin T."/>
            <person name="Bruce D."/>
            <person name="Han C."/>
            <person name="Tapia R."/>
            <person name="Gilna P."/>
            <person name="Schmutz J."/>
            <person name="Larimer F."/>
            <person name="Land M."/>
            <person name="Hauser L."/>
            <person name="Kyrpides N."/>
            <person name="Mikhailova N."/>
            <person name="Fredrickson J."/>
            <person name="Richardson P."/>
        </authorList>
    </citation>
    <scope>NUCLEOTIDE SEQUENCE [LARGE SCALE GENOMIC DNA]</scope>
    <source>
        <strain>ATCC BAA-1098 / SB2B</strain>
    </source>
</reference>
<accession>A1S795</accession>
<gene>
    <name evidence="1" type="primary">dcd</name>
    <name type="ordered locus">Sama_2046</name>
</gene>
<comment type="function">
    <text evidence="1">Catalyzes the deamination of dCTP to dUTP.</text>
</comment>
<comment type="catalytic activity">
    <reaction evidence="1">
        <text>dCTP + H2O + H(+) = dUTP + NH4(+)</text>
        <dbReference type="Rhea" id="RHEA:22680"/>
        <dbReference type="ChEBI" id="CHEBI:15377"/>
        <dbReference type="ChEBI" id="CHEBI:15378"/>
        <dbReference type="ChEBI" id="CHEBI:28938"/>
        <dbReference type="ChEBI" id="CHEBI:61481"/>
        <dbReference type="ChEBI" id="CHEBI:61555"/>
        <dbReference type="EC" id="3.5.4.13"/>
    </reaction>
</comment>
<comment type="pathway">
    <text evidence="1">Pyrimidine metabolism; dUMP biosynthesis; dUMP from dCTP (dUTP route): step 1/2.</text>
</comment>
<comment type="subunit">
    <text evidence="1">Homotrimer.</text>
</comment>
<comment type="similarity">
    <text evidence="1">Belongs to the dCTP deaminase family.</text>
</comment>
<feature type="chain" id="PRO_1000009806" description="dCTP deaminase">
    <location>
        <begin position="1"/>
        <end position="194"/>
    </location>
</feature>
<feature type="region of interest" description="Disordered" evidence="2">
    <location>
        <begin position="171"/>
        <end position="194"/>
    </location>
</feature>
<feature type="active site" description="Proton donor/acceptor" evidence="1">
    <location>
        <position position="138"/>
    </location>
</feature>
<feature type="binding site" evidence="1">
    <location>
        <begin position="110"/>
        <end position="115"/>
    </location>
    <ligand>
        <name>dCTP</name>
        <dbReference type="ChEBI" id="CHEBI:61481"/>
    </ligand>
</feature>
<feature type="binding site" evidence="1">
    <location>
        <position position="128"/>
    </location>
    <ligand>
        <name>dCTP</name>
        <dbReference type="ChEBI" id="CHEBI:61481"/>
    </ligand>
</feature>
<feature type="binding site" evidence="1">
    <location>
        <begin position="136"/>
        <end position="138"/>
    </location>
    <ligand>
        <name>dCTP</name>
        <dbReference type="ChEBI" id="CHEBI:61481"/>
    </ligand>
</feature>
<feature type="binding site" evidence="1">
    <location>
        <position position="171"/>
    </location>
    <ligand>
        <name>dCTP</name>
        <dbReference type="ChEBI" id="CHEBI:61481"/>
    </ligand>
</feature>
<feature type="binding site" evidence="1">
    <location>
        <position position="178"/>
    </location>
    <ligand>
        <name>dCTP</name>
        <dbReference type="ChEBI" id="CHEBI:61481"/>
    </ligand>
</feature>
<feature type="binding site" evidence="1">
    <location>
        <position position="182"/>
    </location>
    <ligand>
        <name>dCTP</name>
        <dbReference type="ChEBI" id="CHEBI:61481"/>
    </ligand>
</feature>
<name>DCD_SHEAM</name>
<evidence type="ECO:0000255" key="1">
    <source>
        <dbReference type="HAMAP-Rule" id="MF_00146"/>
    </source>
</evidence>
<evidence type="ECO:0000256" key="2">
    <source>
        <dbReference type="SAM" id="MobiDB-lite"/>
    </source>
</evidence>
<protein>
    <recommendedName>
        <fullName evidence="1">dCTP deaminase</fullName>
        <ecNumber evidence="1">3.5.4.13</ecNumber>
    </recommendedName>
    <alternativeName>
        <fullName evidence="1">Deoxycytidine triphosphate deaminase</fullName>
    </alternativeName>
</protein>
<proteinExistence type="inferred from homology"/>
<keyword id="KW-0378">Hydrolase</keyword>
<keyword id="KW-0546">Nucleotide metabolism</keyword>
<keyword id="KW-0547">Nucleotide-binding</keyword>
<keyword id="KW-1185">Reference proteome</keyword>